<accession>P9WGV2</accession>
<accession>L0TBZ4</accession>
<accession>O08364</accession>
<accession>P60176</accession>
<accession>P81858</accession>
<gene>
    <name evidence="2" type="primary">ahcY</name>
    <name type="synonym">sahH</name>
    <name type="ordered locus">MT3346</name>
</gene>
<feature type="initiator methionine" description="Removed" evidence="1">
    <location>
        <position position="1"/>
    </location>
</feature>
<feature type="chain" id="PRO_0000428297" description="Adenosylhomocysteinase">
    <location>
        <begin position="2"/>
        <end position="495"/>
    </location>
</feature>
<feature type="binding site" evidence="2">
    <location>
        <position position="71"/>
    </location>
    <ligand>
        <name>substrate</name>
    </ligand>
</feature>
<feature type="binding site" evidence="2">
    <location>
        <position position="156"/>
    </location>
    <ligand>
        <name>substrate</name>
    </ligand>
</feature>
<feature type="binding site" evidence="2">
    <location>
        <position position="218"/>
    </location>
    <ligand>
        <name>substrate</name>
    </ligand>
</feature>
<feature type="binding site" evidence="2">
    <location>
        <begin position="219"/>
        <end position="221"/>
    </location>
    <ligand>
        <name>NAD(+)</name>
        <dbReference type="ChEBI" id="CHEBI:57540"/>
    </ligand>
</feature>
<feature type="binding site" evidence="2">
    <location>
        <position position="248"/>
    </location>
    <ligand>
        <name>substrate</name>
    </ligand>
</feature>
<feature type="binding site" evidence="2">
    <location>
        <position position="252"/>
    </location>
    <ligand>
        <name>substrate</name>
    </ligand>
</feature>
<feature type="binding site" evidence="2">
    <location>
        <position position="253"/>
    </location>
    <ligand>
        <name>NAD(+)</name>
        <dbReference type="ChEBI" id="CHEBI:57540"/>
    </ligand>
</feature>
<feature type="binding site" evidence="2">
    <location>
        <begin position="282"/>
        <end position="287"/>
    </location>
    <ligand>
        <name>NAD(+)</name>
        <dbReference type="ChEBI" id="CHEBI:57540"/>
    </ligand>
</feature>
<feature type="binding site" evidence="2">
    <location>
        <position position="305"/>
    </location>
    <ligand>
        <name>NAD(+)</name>
        <dbReference type="ChEBI" id="CHEBI:57540"/>
    </ligand>
</feature>
<feature type="binding site" evidence="2">
    <location>
        <position position="340"/>
    </location>
    <ligand>
        <name>NAD(+)</name>
        <dbReference type="ChEBI" id="CHEBI:57540"/>
    </ligand>
</feature>
<feature type="binding site" evidence="2">
    <location>
        <begin position="361"/>
        <end position="363"/>
    </location>
    <ligand>
        <name>NAD(+)</name>
        <dbReference type="ChEBI" id="CHEBI:57540"/>
    </ligand>
</feature>
<feature type="binding site" evidence="2">
    <location>
        <position position="409"/>
    </location>
    <ligand>
        <name>NAD(+)</name>
        <dbReference type="ChEBI" id="CHEBI:57540"/>
    </ligand>
</feature>
<protein>
    <recommendedName>
        <fullName evidence="2">Adenosylhomocysteinase</fullName>
        <ecNumber evidence="2">3.13.2.1</ecNumber>
    </recommendedName>
    <alternativeName>
        <fullName evidence="2">S-adenosyl-L-homocysteine hydrolase</fullName>
        <shortName evidence="2">AdoHcyase</shortName>
    </alternativeName>
</protein>
<keyword id="KW-0963">Cytoplasm</keyword>
<keyword id="KW-0378">Hydrolase</keyword>
<keyword id="KW-0520">NAD</keyword>
<keyword id="KW-0554">One-carbon metabolism</keyword>
<keyword id="KW-1185">Reference proteome</keyword>
<reference key="1">
    <citation type="journal article" date="2002" name="J. Bacteriol.">
        <title>Whole-genome comparison of Mycobacterium tuberculosis clinical and laboratory strains.</title>
        <authorList>
            <person name="Fleischmann R.D."/>
            <person name="Alland D."/>
            <person name="Eisen J.A."/>
            <person name="Carpenter L."/>
            <person name="White O."/>
            <person name="Peterson J.D."/>
            <person name="DeBoy R.T."/>
            <person name="Dodson R.J."/>
            <person name="Gwinn M.L."/>
            <person name="Haft D.H."/>
            <person name="Hickey E.K."/>
            <person name="Kolonay J.F."/>
            <person name="Nelson W.C."/>
            <person name="Umayam L.A."/>
            <person name="Ermolaeva M.D."/>
            <person name="Salzberg S.L."/>
            <person name="Delcher A."/>
            <person name="Utterback T.R."/>
            <person name="Weidman J.F."/>
            <person name="Khouri H.M."/>
            <person name="Gill J."/>
            <person name="Mikula A."/>
            <person name="Bishai W."/>
            <person name="Jacobs W.R. Jr."/>
            <person name="Venter J.C."/>
            <person name="Fraser C.M."/>
        </authorList>
    </citation>
    <scope>NUCLEOTIDE SEQUENCE [LARGE SCALE GENOMIC DNA]</scope>
    <source>
        <strain>CDC 1551 / Oshkosh</strain>
    </source>
</reference>
<evidence type="ECO:0000250" key="1"/>
<evidence type="ECO:0000255" key="2">
    <source>
        <dbReference type="HAMAP-Rule" id="MF_00563"/>
    </source>
</evidence>
<proteinExistence type="inferred from homology"/>
<comment type="function">
    <text evidence="2">May play a key role in the regulation of the intracellular concentration of adenosylhomocysteine.</text>
</comment>
<comment type="catalytic activity">
    <reaction evidence="2">
        <text>S-adenosyl-L-homocysteine + H2O = L-homocysteine + adenosine</text>
        <dbReference type="Rhea" id="RHEA:21708"/>
        <dbReference type="ChEBI" id="CHEBI:15377"/>
        <dbReference type="ChEBI" id="CHEBI:16335"/>
        <dbReference type="ChEBI" id="CHEBI:57856"/>
        <dbReference type="ChEBI" id="CHEBI:58199"/>
        <dbReference type="EC" id="3.13.2.1"/>
    </reaction>
</comment>
<comment type="cofactor">
    <cofactor evidence="2">
        <name>NAD(+)</name>
        <dbReference type="ChEBI" id="CHEBI:57540"/>
    </cofactor>
    <text evidence="2">Binds 1 NAD(+) per subunit.</text>
</comment>
<comment type="pathway">
    <text evidence="2">Amino-acid biosynthesis; L-homocysteine biosynthesis; L-homocysteine from S-adenosyl-L-homocysteine: step 1/1.</text>
</comment>
<comment type="subunit">
    <text evidence="1">Homotetramer.</text>
</comment>
<comment type="subcellular location">
    <subcellularLocation>
        <location evidence="2">Cytoplasm</location>
    </subcellularLocation>
</comment>
<comment type="similarity">
    <text evidence="2">Belongs to the adenosylhomocysteinase family.</text>
</comment>
<name>SAHH_MYCTO</name>
<sequence>MTGNLVTKNSLTPDVRNGIDFKIADLSLADFGRKELRIAEHEMPGLMSLRREYAEVQPLKGARISGSLHMTVQTAVLIETLTALGAEVRWASCNIFSTQDHAAAAVVVGPHGTPDEPKGVPVFAWKGETLEEYWWAAEQMLTWPDPDKPANMILDDGGDATMLVLRGMQYEKAGVVPPAEEDDPAEWKVFLNLLRTRFETDKDKWTKIAESVKGVTEETTTGVLRLYQFAAAGDLAFPAINVNDSVTKSKFDNKYGTRHSLIDGINRGTDALIGGKKVLICGYGDVGKGCAEAMKGQGARVSVTEIDPINALQAMMEGFDVVTVEEAIGDADIVVTATGNKDIIMLEHIKAMKDHAILGNIGHFDNEIDMAGLERSGATRVNVKPQVDLWTFGDTGRSIIVLSEGRLLNLGNATGHPSFVMSNSFANQTIAQIELWTKNDEYDNEVYRLPKHLDEKVARIHVEALGGHLTKLTKEQAEYLGVDVEGPYKPDHYRY</sequence>
<dbReference type="EC" id="3.13.2.1" evidence="2"/>
<dbReference type="EMBL" id="AE000516">
    <property type="protein sequence ID" value="AAK47688.1"/>
    <property type="molecule type" value="Genomic_DNA"/>
</dbReference>
<dbReference type="PIR" id="B70593">
    <property type="entry name" value="B70593"/>
</dbReference>
<dbReference type="RefSeq" id="WP_003417039.1">
    <property type="nucleotide sequence ID" value="NZ_KK341227.1"/>
</dbReference>
<dbReference type="SMR" id="P9WGV2"/>
<dbReference type="GeneID" id="45427242"/>
<dbReference type="KEGG" id="mtc:MT3346"/>
<dbReference type="PATRIC" id="fig|83331.31.peg.3602"/>
<dbReference type="HOGENOM" id="CLU_025194_2_1_11"/>
<dbReference type="UniPathway" id="UPA00314">
    <property type="reaction ID" value="UER00076"/>
</dbReference>
<dbReference type="Proteomes" id="UP000001020">
    <property type="component" value="Chromosome"/>
</dbReference>
<dbReference type="GO" id="GO:0005829">
    <property type="term" value="C:cytosol"/>
    <property type="evidence" value="ECO:0007669"/>
    <property type="project" value="TreeGrafter"/>
</dbReference>
<dbReference type="GO" id="GO:0004013">
    <property type="term" value="F:adenosylhomocysteinase activity"/>
    <property type="evidence" value="ECO:0007669"/>
    <property type="project" value="UniProtKB-UniRule"/>
</dbReference>
<dbReference type="GO" id="GO:0071269">
    <property type="term" value="P:L-homocysteine biosynthetic process"/>
    <property type="evidence" value="ECO:0007669"/>
    <property type="project" value="UniProtKB-UniRule"/>
</dbReference>
<dbReference type="GO" id="GO:0006730">
    <property type="term" value="P:one-carbon metabolic process"/>
    <property type="evidence" value="ECO:0007669"/>
    <property type="project" value="UniProtKB-KW"/>
</dbReference>
<dbReference type="GO" id="GO:0033353">
    <property type="term" value="P:S-adenosylmethionine cycle"/>
    <property type="evidence" value="ECO:0007669"/>
    <property type="project" value="TreeGrafter"/>
</dbReference>
<dbReference type="CDD" id="cd00401">
    <property type="entry name" value="SAHH"/>
    <property type="match status" value="1"/>
</dbReference>
<dbReference type="FunFam" id="3.40.50.720:FF:000004">
    <property type="entry name" value="Adenosylhomocysteinase"/>
    <property type="match status" value="1"/>
</dbReference>
<dbReference type="Gene3D" id="3.40.50.1480">
    <property type="entry name" value="Adenosylhomocysteinase-like"/>
    <property type="match status" value="1"/>
</dbReference>
<dbReference type="Gene3D" id="3.40.50.720">
    <property type="entry name" value="NAD(P)-binding Rossmann-like Domain"/>
    <property type="match status" value="1"/>
</dbReference>
<dbReference type="HAMAP" id="MF_00563">
    <property type="entry name" value="AdoHcyase"/>
    <property type="match status" value="1"/>
</dbReference>
<dbReference type="InterPro" id="IPR042172">
    <property type="entry name" value="Adenosylhomocyst_ase-like_sf"/>
</dbReference>
<dbReference type="InterPro" id="IPR000043">
    <property type="entry name" value="Adenosylhomocysteinase-like"/>
</dbReference>
<dbReference type="InterPro" id="IPR015878">
    <property type="entry name" value="Ado_hCys_hydrolase_NAD-bd"/>
</dbReference>
<dbReference type="InterPro" id="IPR036291">
    <property type="entry name" value="NAD(P)-bd_dom_sf"/>
</dbReference>
<dbReference type="InterPro" id="IPR020082">
    <property type="entry name" value="S-Ado-L-homoCys_hydrolase_CS"/>
</dbReference>
<dbReference type="NCBIfam" id="TIGR00936">
    <property type="entry name" value="ahcY"/>
    <property type="match status" value="1"/>
</dbReference>
<dbReference type="NCBIfam" id="NF004005">
    <property type="entry name" value="PRK05476.2-3"/>
    <property type="match status" value="1"/>
</dbReference>
<dbReference type="PANTHER" id="PTHR23420">
    <property type="entry name" value="ADENOSYLHOMOCYSTEINASE"/>
    <property type="match status" value="1"/>
</dbReference>
<dbReference type="PANTHER" id="PTHR23420:SF0">
    <property type="entry name" value="ADENOSYLHOMOCYSTEINASE"/>
    <property type="match status" value="1"/>
</dbReference>
<dbReference type="Pfam" id="PF05221">
    <property type="entry name" value="AdoHcyase"/>
    <property type="match status" value="1"/>
</dbReference>
<dbReference type="Pfam" id="PF00670">
    <property type="entry name" value="AdoHcyase_NAD"/>
    <property type="match status" value="1"/>
</dbReference>
<dbReference type="PIRSF" id="PIRSF001109">
    <property type="entry name" value="Ad_hcy_hydrolase"/>
    <property type="match status" value="1"/>
</dbReference>
<dbReference type="SMART" id="SM00996">
    <property type="entry name" value="AdoHcyase"/>
    <property type="match status" value="1"/>
</dbReference>
<dbReference type="SMART" id="SM00997">
    <property type="entry name" value="AdoHcyase_NAD"/>
    <property type="match status" value="1"/>
</dbReference>
<dbReference type="SUPFAM" id="SSF52283">
    <property type="entry name" value="Formate/glycerate dehydrogenase catalytic domain-like"/>
    <property type="match status" value="1"/>
</dbReference>
<dbReference type="SUPFAM" id="SSF51735">
    <property type="entry name" value="NAD(P)-binding Rossmann-fold domains"/>
    <property type="match status" value="1"/>
</dbReference>
<dbReference type="PROSITE" id="PS00738">
    <property type="entry name" value="ADOHCYASE_1"/>
    <property type="match status" value="1"/>
</dbReference>
<dbReference type="PROSITE" id="PS00739">
    <property type="entry name" value="ADOHCYASE_2"/>
    <property type="match status" value="1"/>
</dbReference>
<organism>
    <name type="scientific">Mycobacterium tuberculosis (strain CDC 1551 / Oshkosh)</name>
    <dbReference type="NCBI Taxonomy" id="83331"/>
    <lineage>
        <taxon>Bacteria</taxon>
        <taxon>Bacillati</taxon>
        <taxon>Actinomycetota</taxon>
        <taxon>Actinomycetes</taxon>
        <taxon>Mycobacteriales</taxon>
        <taxon>Mycobacteriaceae</taxon>
        <taxon>Mycobacterium</taxon>
        <taxon>Mycobacterium tuberculosis complex</taxon>
    </lineage>
</organism>